<proteinExistence type="inferred from homology"/>
<comment type="function">
    <text evidence="1">Catalyzes the oxidation of 5,10-methylenetetrahydrofolate to 5,10-methenyltetrahydrofolate and then the hydrolysis of 5,10-methenyltetrahydrofolate to 10-formyltetrahydrofolate.</text>
</comment>
<comment type="catalytic activity">
    <reaction evidence="1">
        <text>(6R)-5,10-methylene-5,6,7,8-tetrahydrofolate + NADP(+) = (6R)-5,10-methenyltetrahydrofolate + NADPH</text>
        <dbReference type="Rhea" id="RHEA:22812"/>
        <dbReference type="ChEBI" id="CHEBI:15636"/>
        <dbReference type="ChEBI" id="CHEBI:57455"/>
        <dbReference type="ChEBI" id="CHEBI:57783"/>
        <dbReference type="ChEBI" id="CHEBI:58349"/>
        <dbReference type="EC" id="1.5.1.5"/>
    </reaction>
</comment>
<comment type="catalytic activity">
    <reaction evidence="1">
        <text>(6R)-5,10-methenyltetrahydrofolate + H2O = (6R)-10-formyltetrahydrofolate + H(+)</text>
        <dbReference type="Rhea" id="RHEA:23700"/>
        <dbReference type="ChEBI" id="CHEBI:15377"/>
        <dbReference type="ChEBI" id="CHEBI:15378"/>
        <dbReference type="ChEBI" id="CHEBI:57455"/>
        <dbReference type="ChEBI" id="CHEBI:195366"/>
        <dbReference type="EC" id="3.5.4.9"/>
    </reaction>
</comment>
<comment type="pathway">
    <text evidence="1">One-carbon metabolism; tetrahydrofolate interconversion.</text>
</comment>
<comment type="subunit">
    <text evidence="1">Homodimer.</text>
</comment>
<comment type="similarity">
    <text evidence="1">Belongs to the tetrahydrofolate dehydrogenase/cyclohydrolase family.</text>
</comment>
<organism>
    <name type="scientific">Mycoplasma pneumoniae (strain ATCC 29342 / M129 / Subtype 1)</name>
    <name type="common">Mycoplasmoides pneumoniae</name>
    <dbReference type="NCBI Taxonomy" id="272634"/>
    <lineage>
        <taxon>Bacteria</taxon>
        <taxon>Bacillati</taxon>
        <taxon>Mycoplasmatota</taxon>
        <taxon>Mycoplasmoidales</taxon>
        <taxon>Mycoplasmoidaceae</taxon>
        <taxon>Mycoplasmoides</taxon>
    </lineage>
</organism>
<accession>P75096</accession>
<evidence type="ECO:0000255" key="1">
    <source>
        <dbReference type="HAMAP-Rule" id="MF_01576"/>
    </source>
</evidence>
<sequence>MSFDGKQLAHEILLTYKNRDWSQVKLVILQTNNDVSSDAFIRQKMNACNTLGAQSELIKYHESVTEKELLEKIQQLNTDPEVTGIILQLPVYPHLKQNKLLKAIDPYKDVDYLTGNCPLPIRSCVVEAVLILKEHFHHDFTNKQIVVVGLGVTGGGPIFHYLKETGHQVVGCDKHTPNTMELIKTADVVITAIGKPHFFKTTNFKPGVILYDVGVSRNVLNKLCGDIDPNGIEKVAKWWSPTPGGVGPFTVLAIMKNLWVLYEAHQRRI</sequence>
<keyword id="KW-0028">Amino-acid biosynthesis</keyword>
<keyword id="KW-0368">Histidine biosynthesis</keyword>
<keyword id="KW-0378">Hydrolase</keyword>
<keyword id="KW-0486">Methionine biosynthesis</keyword>
<keyword id="KW-0511">Multifunctional enzyme</keyword>
<keyword id="KW-0521">NADP</keyword>
<keyword id="KW-0554">One-carbon metabolism</keyword>
<keyword id="KW-0560">Oxidoreductase</keyword>
<keyword id="KW-0658">Purine biosynthesis</keyword>
<keyword id="KW-1185">Reference proteome</keyword>
<dbReference type="EC" id="1.5.1.5" evidence="1"/>
<dbReference type="EC" id="3.5.4.9" evidence="1"/>
<dbReference type="EMBL" id="U00089">
    <property type="protein sequence ID" value="AAB95785.1"/>
    <property type="molecule type" value="Genomic_DNA"/>
</dbReference>
<dbReference type="PIR" id="S73463">
    <property type="entry name" value="S73463"/>
</dbReference>
<dbReference type="RefSeq" id="NP_109705.1">
    <property type="nucleotide sequence ID" value="NC_000912.1"/>
</dbReference>
<dbReference type="RefSeq" id="WP_010874374.1">
    <property type="nucleotide sequence ID" value="NZ_OU342337.1"/>
</dbReference>
<dbReference type="SMR" id="P75096"/>
<dbReference type="STRING" id="272634.MPN_017"/>
<dbReference type="EnsemblBacteria" id="AAB95785">
    <property type="protein sequence ID" value="AAB95785"/>
    <property type="gene ID" value="MPN_017"/>
</dbReference>
<dbReference type="KEGG" id="mpn:MPN_017"/>
<dbReference type="PATRIC" id="fig|272634.6.peg.16"/>
<dbReference type="HOGENOM" id="CLU_034045_2_0_14"/>
<dbReference type="OrthoDB" id="9803580at2"/>
<dbReference type="BioCyc" id="MetaCyc:MONOMER-580"/>
<dbReference type="BioCyc" id="MPNE272634:G1GJ3-24-MONOMER"/>
<dbReference type="UniPathway" id="UPA00193"/>
<dbReference type="Proteomes" id="UP000000808">
    <property type="component" value="Chromosome"/>
</dbReference>
<dbReference type="GO" id="GO:0005829">
    <property type="term" value="C:cytosol"/>
    <property type="evidence" value="ECO:0007669"/>
    <property type="project" value="TreeGrafter"/>
</dbReference>
<dbReference type="GO" id="GO:0004477">
    <property type="term" value="F:methenyltetrahydrofolate cyclohydrolase activity"/>
    <property type="evidence" value="ECO:0007669"/>
    <property type="project" value="UniProtKB-UniRule"/>
</dbReference>
<dbReference type="GO" id="GO:0004488">
    <property type="term" value="F:methylenetetrahydrofolate dehydrogenase (NADP+) activity"/>
    <property type="evidence" value="ECO:0007669"/>
    <property type="project" value="UniProtKB-UniRule"/>
</dbReference>
<dbReference type="GO" id="GO:0000105">
    <property type="term" value="P:L-histidine biosynthetic process"/>
    <property type="evidence" value="ECO:0007669"/>
    <property type="project" value="UniProtKB-KW"/>
</dbReference>
<dbReference type="GO" id="GO:0009086">
    <property type="term" value="P:methionine biosynthetic process"/>
    <property type="evidence" value="ECO:0007669"/>
    <property type="project" value="UniProtKB-KW"/>
</dbReference>
<dbReference type="GO" id="GO:0006164">
    <property type="term" value="P:purine nucleotide biosynthetic process"/>
    <property type="evidence" value="ECO:0007669"/>
    <property type="project" value="UniProtKB-KW"/>
</dbReference>
<dbReference type="GO" id="GO:0035999">
    <property type="term" value="P:tetrahydrofolate interconversion"/>
    <property type="evidence" value="ECO:0007669"/>
    <property type="project" value="UniProtKB-UniRule"/>
</dbReference>
<dbReference type="Gene3D" id="3.40.50.10860">
    <property type="entry name" value="Leucine Dehydrogenase, chain A, domain 1"/>
    <property type="match status" value="1"/>
</dbReference>
<dbReference type="Gene3D" id="3.40.50.720">
    <property type="entry name" value="NAD(P)-binding Rossmann-like Domain"/>
    <property type="match status" value="1"/>
</dbReference>
<dbReference type="HAMAP" id="MF_01576">
    <property type="entry name" value="THF_DHG_CYH"/>
    <property type="match status" value="1"/>
</dbReference>
<dbReference type="InterPro" id="IPR046346">
    <property type="entry name" value="Aminoacid_DH-like_N_sf"/>
</dbReference>
<dbReference type="InterPro" id="IPR036291">
    <property type="entry name" value="NAD(P)-bd_dom_sf"/>
</dbReference>
<dbReference type="InterPro" id="IPR000672">
    <property type="entry name" value="THF_DH/CycHdrlase"/>
</dbReference>
<dbReference type="InterPro" id="IPR020630">
    <property type="entry name" value="THF_DH/CycHdrlase_cat_dom"/>
</dbReference>
<dbReference type="InterPro" id="IPR020867">
    <property type="entry name" value="THF_DH/CycHdrlase_CS"/>
</dbReference>
<dbReference type="InterPro" id="IPR020631">
    <property type="entry name" value="THF_DH/CycHdrlase_NAD-bd_dom"/>
</dbReference>
<dbReference type="PANTHER" id="PTHR48099:SF5">
    <property type="entry name" value="C-1-TETRAHYDROFOLATE SYNTHASE, CYTOPLASMIC"/>
    <property type="match status" value="1"/>
</dbReference>
<dbReference type="PANTHER" id="PTHR48099">
    <property type="entry name" value="C-1-TETRAHYDROFOLATE SYNTHASE, CYTOPLASMIC-RELATED"/>
    <property type="match status" value="1"/>
</dbReference>
<dbReference type="Pfam" id="PF00763">
    <property type="entry name" value="THF_DHG_CYH"/>
    <property type="match status" value="1"/>
</dbReference>
<dbReference type="Pfam" id="PF02882">
    <property type="entry name" value="THF_DHG_CYH_C"/>
    <property type="match status" value="1"/>
</dbReference>
<dbReference type="PRINTS" id="PR00085">
    <property type="entry name" value="THFDHDRGNASE"/>
</dbReference>
<dbReference type="SUPFAM" id="SSF53223">
    <property type="entry name" value="Aminoacid dehydrogenase-like, N-terminal domain"/>
    <property type="match status" value="1"/>
</dbReference>
<dbReference type="SUPFAM" id="SSF51735">
    <property type="entry name" value="NAD(P)-binding Rossmann-fold domains"/>
    <property type="match status" value="1"/>
</dbReference>
<dbReference type="PROSITE" id="PS00766">
    <property type="entry name" value="THF_DHG_CYH_1"/>
    <property type="match status" value="1"/>
</dbReference>
<dbReference type="PROSITE" id="PS00767">
    <property type="entry name" value="THF_DHG_CYH_2"/>
    <property type="match status" value="1"/>
</dbReference>
<name>FOLD_MYCPN</name>
<reference key="1">
    <citation type="journal article" date="1996" name="Nucleic Acids Res.">
        <title>Complete sequence analysis of the genome of the bacterium Mycoplasma pneumoniae.</title>
        <authorList>
            <person name="Himmelreich R."/>
            <person name="Hilbert H."/>
            <person name="Plagens H."/>
            <person name="Pirkl E."/>
            <person name="Li B.-C."/>
            <person name="Herrmann R."/>
        </authorList>
    </citation>
    <scope>NUCLEOTIDE SEQUENCE [LARGE SCALE GENOMIC DNA]</scope>
    <source>
        <strain>ATCC 29342 / M129 / Subtype 1</strain>
    </source>
</reference>
<feature type="chain" id="PRO_0000199311" description="Bifunctional protein FolD">
    <location>
        <begin position="1"/>
        <end position="269"/>
    </location>
</feature>
<feature type="binding site" evidence="1">
    <location>
        <begin position="149"/>
        <end position="151"/>
    </location>
    <ligand>
        <name>NADP(+)</name>
        <dbReference type="ChEBI" id="CHEBI:58349"/>
    </ligand>
</feature>
<feature type="binding site" evidence="1">
    <location>
        <position position="215"/>
    </location>
    <ligand>
        <name>NADP(+)</name>
        <dbReference type="ChEBI" id="CHEBI:58349"/>
    </ligand>
</feature>
<protein>
    <recommendedName>
        <fullName evidence="1">Bifunctional protein FolD</fullName>
    </recommendedName>
    <domain>
        <recommendedName>
            <fullName evidence="1">Methylenetetrahydrofolate dehydrogenase</fullName>
            <ecNumber evidence="1">1.5.1.5</ecNumber>
        </recommendedName>
    </domain>
    <domain>
        <recommendedName>
            <fullName evidence="1">Methenyltetrahydrofolate cyclohydrolase</fullName>
            <ecNumber evidence="1">3.5.4.9</ecNumber>
        </recommendedName>
    </domain>
</protein>
<gene>
    <name evidence="1" type="primary">folD</name>
    <name type="ordered locus">MPN_017</name>
    <name type="ORF">MP137</name>
</gene>